<comment type="function">
    <text evidence="1">Plays an important role in DNA replication, recombination and repair. Binds to ssDNA and to an array of partner proteins to recruit them to their sites of action during DNA metabolism.</text>
</comment>
<comment type="subunit">
    <text evidence="1">Homotetramer.</text>
</comment>
<name>SSB_CAUVC</name>
<sequence length="167" mass="17971">MAGSVNKVILVGNLGADPEIRSLGSGDRVANLRIATSETWRDRSSGERKEKTEWHRVVIFNDNLVKVAEQYLRKGSTVYIEGALQTRKWTDNTGQEKYSTEIVLQKFRGELTMLGGRGGDAGMSSGGGDEYGGGYSGGGSSFGGGQRSQPSGPRESFSADLDDEIPF</sequence>
<gene>
    <name type="primary">ssb</name>
    <name type="ordered locus">CC_1468</name>
</gene>
<reference key="1">
    <citation type="journal article" date="2001" name="Proc. Natl. Acad. Sci. U.S.A.">
        <title>Complete genome sequence of Caulobacter crescentus.</title>
        <authorList>
            <person name="Nierman W.C."/>
            <person name="Feldblyum T.V."/>
            <person name="Laub M.T."/>
            <person name="Paulsen I.T."/>
            <person name="Nelson K.E."/>
            <person name="Eisen J.A."/>
            <person name="Heidelberg J.F."/>
            <person name="Alley M.R.K."/>
            <person name="Ohta N."/>
            <person name="Maddock J.R."/>
            <person name="Potocka I."/>
            <person name="Nelson W.C."/>
            <person name="Newton A."/>
            <person name="Stephens C."/>
            <person name="Phadke N.D."/>
            <person name="Ely B."/>
            <person name="DeBoy R.T."/>
            <person name="Dodson R.J."/>
            <person name="Durkin A.S."/>
            <person name="Gwinn M.L."/>
            <person name="Haft D.H."/>
            <person name="Kolonay J.F."/>
            <person name="Smit J."/>
            <person name="Craven M.B."/>
            <person name="Khouri H.M."/>
            <person name="Shetty J."/>
            <person name="Berry K.J."/>
            <person name="Utterback T.R."/>
            <person name="Tran K."/>
            <person name="Wolf A.M."/>
            <person name="Vamathevan J.J."/>
            <person name="Ermolaeva M.D."/>
            <person name="White O."/>
            <person name="Salzberg S.L."/>
            <person name="Venter J.C."/>
            <person name="Shapiro L."/>
            <person name="Fraser C.M."/>
        </authorList>
    </citation>
    <scope>NUCLEOTIDE SEQUENCE [LARGE SCALE GENOMIC DNA]</scope>
    <source>
        <strain>ATCC 19089 / CIP 103742 / CB 15</strain>
    </source>
</reference>
<keyword id="KW-0227">DNA damage</keyword>
<keyword id="KW-0233">DNA recombination</keyword>
<keyword id="KW-0234">DNA repair</keyword>
<keyword id="KW-0235">DNA replication</keyword>
<keyword id="KW-0238">DNA-binding</keyword>
<keyword id="KW-1185">Reference proteome</keyword>
<organism>
    <name type="scientific">Caulobacter vibrioides (strain ATCC 19089 / CIP 103742 / CB 15)</name>
    <name type="common">Caulobacter crescentus</name>
    <dbReference type="NCBI Taxonomy" id="190650"/>
    <lineage>
        <taxon>Bacteria</taxon>
        <taxon>Pseudomonadati</taxon>
        <taxon>Pseudomonadota</taxon>
        <taxon>Alphaproteobacteria</taxon>
        <taxon>Caulobacterales</taxon>
        <taxon>Caulobacteraceae</taxon>
        <taxon>Caulobacter</taxon>
    </lineage>
</organism>
<evidence type="ECO:0000255" key="1">
    <source>
        <dbReference type="HAMAP-Rule" id="MF_00984"/>
    </source>
</evidence>
<evidence type="ECO:0000256" key="2">
    <source>
        <dbReference type="SAM" id="MobiDB-lite"/>
    </source>
</evidence>
<protein>
    <recommendedName>
        <fullName evidence="1">Single-stranded DNA-binding protein</fullName>
        <shortName evidence="1">SSB</shortName>
    </recommendedName>
</protein>
<dbReference type="EMBL" id="AE005673">
    <property type="protein sequence ID" value="AAK23448.1"/>
    <property type="molecule type" value="Genomic_DNA"/>
</dbReference>
<dbReference type="PIR" id="D87431">
    <property type="entry name" value="D87431"/>
</dbReference>
<dbReference type="RefSeq" id="NP_420280.1">
    <property type="nucleotide sequence ID" value="NC_002696.2"/>
</dbReference>
<dbReference type="RefSeq" id="WP_010919343.1">
    <property type="nucleotide sequence ID" value="NC_002696.2"/>
</dbReference>
<dbReference type="SMR" id="Q9A894"/>
<dbReference type="STRING" id="190650.CC_1468"/>
<dbReference type="EnsemblBacteria" id="AAK23448">
    <property type="protein sequence ID" value="AAK23448"/>
    <property type="gene ID" value="CC_1468"/>
</dbReference>
<dbReference type="KEGG" id="ccr:CC_1468"/>
<dbReference type="PATRIC" id="fig|190650.5.peg.1494"/>
<dbReference type="eggNOG" id="COG0629">
    <property type="taxonomic scope" value="Bacteria"/>
</dbReference>
<dbReference type="HOGENOM" id="CLU_078758_0_1_5"/>
<dbReference type="BioCyc" id="CAULO:CC1468-MONOMER"/>
<dbReference type="Proteomes" id="UP000001816">
    <property type="component" value="Chromosome"/>
</dbReference>
<dbReference type="GO" id="GO:0009295">
    <property type="term" value="C:nucleoid"/>
    <property type="evidence" value="ECO:0007669"/>
    <property type="project" value="TreeGrafter"/>
</dbReference>
<dbReference type="GO" id="GO:0003697">
    <property type="term" value="F:single-stranded DNA binding"/>
    <property type="evidence" value="ECO:0007669"/>
    <property type="project" value="UniProtKB-UniRule"/>
</dbReference>
<dbReference type="GO" id="GO:0006310">
    <property type="term" value="P:DNA recombination"/>
    <property type="evidence" value="ECO:0007669"/>
    <property type="project" value="UniProtKB-UniRule"/>
</dbReference>
<dbReference type="GO" id="GO:0006281">
    <property type="term" value="P:DNA repair"/>
    <property type="evidence" value="ECO:0007669"/>
    <property type="project" value="UniProtKB-UniRule"/>
</dbReference>
<dbReference type="GO" id="GO:0006260">
    <property type="term" value="P:DNA replication"/>
    <property type="evidence" value="ECO:0007669"/>
    <property type="project" value="UniProtKB-UniRule"/>
</dbReference>
<dbReference type="GO" id="GO:0009432">
    <property type="term" value="P:SOS response"/>
    <property type="evidence" value="ECO:0000269"/>
    <property type="project" value="CollecTF"/>
</dbReference>
<dbReference type="CDD" id="cd04496">
    <property type="entry name" value="SSB_OBF"/>
    <property type="match status" value="1"/>
</dbReference>
<dbReference type="Gene3D" id="2.40.50.140">
    <property type="entry name" value="Nucleic acid-binding proteins"/>
    <property type="match status" value="1"/>
</dbReference>
<dbReference type="HAMAP" id="MF_00984">
    <property type="entry name" value="SSB"/>
    <property type="match status" value="1"/>
</dbReference>
<dbReference type="InterPro" id="IPR012340">
    <property type="entry name" value="NA-bd_OB-fold"/>
</dbReference>
<dbReference type="InterPro" id="IPR000424">
    <property type="entry name" value="Primosome_PriB/ssb"/>
</dbReference>
<dbReference type="InterPro" id="IPR011344">
    <property type="entry name" value="ssDNA-bd"/>
</dbReference>
<dbReference type="NCBIfam" id="TIGR00621">
    <property type="entry name" value="ssb"/>
    <property type="match status" value="1"/>
</dbReference>
<dbReference type="PANTHER" id="PTHR10302">
    <property type="entry name" value="SINGLE-STRANDED DNA-BINDING PROTEIN"/>
    <property type="match status" value="1"/>
</dbReference>
<dbReference type="PANTHER" id="PTHR10302:SF27">
    <property type="entry name" value="SINGLE-STRANDED DNA-BINDING PROTEIN"/>
    <property type="match status" value="1"/>
</dbReference>
<dbReference type="Pfam" id="PF00436">
    <property type="entry name" value="SSB"/>
    <property type="match status" value="1"/>
</dbReference>
<dbReference type="SUPFAM" id="SSF50249">
    <property type="entry name" value="Nucleic acid-binding proteins"/>
    <property type="match status" value="1"/>
</dbReference>
<dbReference type="PROSITE" id="PS50935">
    <property type="entry name" value="SSB"/>
    <property type="match status" value="1"/>
</dbReference>
<proteinExistence type="inferred from homology"/>
<feature type="chain" id="PRO_0000096021" description="Single-stranded DNA-binding protein">
    <location>
        <begin position="1"/>
        <end position="167"/>
    </location>
</feature>
<feature type="domain" description="SSB" evidence="1">
    <location>
        <begin position="5"/>
        <end position="111"/>
    </location>
</feature>
<feature type="DNA-binding region" evidence="1">
    <location>
        <begin position="54"/>
        <end position="60"/>
    </location>
</feature>
<feature type="region of interest" description="Disordered" evidence="2">
    <location>
        <begin position="118"/>
        <end position="167"/>
    </location>
</feature>
<feature type="short sequence motif" description="Important for interaction with partner proteins" evidence="1">
    <location>
        <begin position="162"/>
        <end position="167"/>
    </location>
</feature>
<feature type="compositionally biased region" description="Gly residues" evidence="2">
    <location>
        <begin position="118"/>
        <end position="146"/>
    </location>
</feature>
<accession>Q9A894</accession>